<accession>P0DKZ6</accession>
<feature type="peptide" id="PRO_0000421906" description="Bradykinin-potentiating peptide 13a" evidence="2">
    <location>
        <begin position="1"/>
        <end position="13"/>
    </location>
</feature>
<feature type="modified residue" description="Pyrrolidone carboxylic acid" evidence="2">
    <location>
        <position position="1"/>
    </location>
</feature>
<feature type="unsure residue" description="I or L" evidence="4">
    <location>
        <position position="11"/>
    </location>
</feature>
<reference key="1">
    <citation type="journal article" date="2012" name="Mol. Cell. Proteomics">
        <title>Peptidomics of three Bothrops snake venoms: insights into the molecular diversification of proteomes and peptidomes.</title>
        <authorList>
            <person name="Tashima A.K."/>
            <person name="Zelanis A."/>
            <person name="Kitano E.S."/>
            <person name="Ianzer D."/>
            <person name="Melo R.L."/>
            <person name="Rioli V."/>
            <person name="Sant'anna S.S."/>
            <person name="Schenberg A.C."/>
            <person name="Camargo A.C."/>
            <person name="Serrano S.M.T."/>
        </authorList>
    </citation>
    <scope>PROTEIN SEQUENCE</scope>
    <scope>FUNCTION</scope>
    <scope>PYROGLUTAMATE FORMATION AT GLN-1</scope>
    <scope>MASS SPECTROMETRY</scope>
    <scope>SUBCELLULAR LOCATION</scope>
    <source>
        <tissue>Venom</tissue>
    </source>
</reference>
<keyword id="KW-0903">Direct protein sequencing</keyword>
<keyword id="KW-0382">Hypotensive agent</keyword>
<keyword id="KW-0481">Metalloenzyme inhibitor</keyword>
<keyword id="KW-0483">Metalloprotease inhibitor</keyword>
<keyword id="KW-0646">Protease inhibitor</keyword>
<keyword id="KW-0873">Pyrrolidone carboxylic acid</keyword>
<keyword id="KW-0964">Secreted</keyword>
<keyword id="KW-0800">Toxin</keyword>
<name>BPPDA_BOTCO</name>
<proteinExistence type="evidence at protein level"/>
<dbReference type="GO" id="GO:0005576">
    <property type="term" value="C:extracellular region"/>
    <property type="evidence" value="ECO:0007669"/>
    <property type="project" value="UniProtKB-SubCell"/>
</dbReference>
<dbReference type="GO" id="GO:0030414">
    <property type="term" value="F:peptidase inhibitor activity"/>
    <property type="evidence" value="ECO:0007669"/>
    <property type="project" value="UniProtKB-KW"/>
</dbReference>
<dbReference type="GO" id="GO:0090729">
    <property type="term" value="F:toxin activity"/>
    <property type="evidence" value="ECO:0007669"/>
    <property type="project" value="UniProtKB-KW"/>
</dbReference>
<dbReference type="GO" id="GO:0008217">
    <property type="term" value="P:regulation of blood pressure"/>
    <property type="evidence" value="ECO:0007669"/>
    <property type="project" value="UniProtKB-KW"/>
</dbReference>
<evidence type="ECO:0000250" key="1"/>
<evidence type="ECO:0000269" key="2">
    <source>
    </source>
</evidence>
<evidence type="ECO:0000303" key="3">
    <source>
    </source>
</evidence>
<evidence type="ECO:0000305" key="4"/>
<evidence type="ECO:0000305" key="5">
    <source>
    </source>
</evidence>
<organism>
    <name type="scientific">Bothrops cotiara</name>
    <name type="common">Cotiara</name>
    <name type="synonym">Rhinocerophis cotiara</name>
    <dbReference type="NCBI Taxonomy" id="8727"/>
    <lineage>
        <taxon>Eukaryota</taxon>
        <taxon>Metazoa</taxon>
        <taxon>Chordata</taxon>
        <taxon>Craniata</taxon>
        <taxon>Vertebrata</taxon>
        <taxon>Euteleostomi</taxon>
        <taxon>Lepidosauria</taxon>
        <taxon>Squamata</taxon>
        <taxon>Bifurcata</taxon>
        <taxon>Unidentata</taxon>
        <taxon>Episquamata</taxon>
        <taxon>Toxicofera</taxon>
        <taxon>Serpentes</taxon>
        <taxon>Colubroidea</taxon>
        <taxon>Viperidae</taxon>
        <taxon>Crotalinae</taxon>
        <taxon>Bothrops</taxon>
    </lineage>
</organism>
<protein>
    <recommendedName>
        <fullName evidence="3">Bradykinin-potentiating peptide 13a</fullName>
        <shortName evidence="3">BPP-13a</shortName>
    </recommendedName>
</protein>
<sequence>QGGWPRPGPEIPP</sequence>
<comment type="function">
    <text evidence="1 2">This peptide both inhibits the activity of the angiotensin-converting enzyme (ACE) and enhances the action of bradykinin by inhibiting the peptidases that inactivate it. It acts as an indirect hypotensive agent (By similarity).</text>
</comment>
<comment type="subcellular location">
    <subcellularLocation>
        <location evidence="2">Secreted</location>
    </subcellularLocation>
</comment>
<comment type="tissue specificity">
    <text evidence="5">Expressed by the venom gland.</text>
</comment>
<comment type="mass spectrometry"/>
<comment type="similarity">
    <text evidence="4">Belongs to the bradykinin-potentiating peptide family.</text>
</comment>